<keyword id="KW-0067">ATP-binding</keyword>
<keyword id="KW-0963">Cytoplasm</keyword>
<keyword id="KW-1015">Disulfide bond</keyword>
<keyword id="KW-0547">Nucleotide-binding</keyword>
<keyword id="KW-0694">RNA-binding</keyword>
<keyword id="KW-0808">Transferase</keyword>
<keyword id="KW-0819">tRNA processing</keyword>
<keyword id="KW-0820">tRNA-binding</keyword>
<proteinExistence type="inferred from homology"/>
<reference key="1">
    <citation type="submission" date="2008-06" db="EMBL/GenBank/DDBJ databases">
        <title>Complete sequence of Chlorobium phaeobacteroides BS1.</title>
        <authorList>
            <consortium name="US DOE Joint Genome Institute"/>
            <person name="Lucas S."/>
            <person name="Copeland A."/>
            <person name="Lapidus A."/>
            <person name="Glavina del Rio T."/>
            <person name="Dalin E."/>
            <person name="Tice H."/>
            <person name="Bruce D."/>
            <person name="Goodwin L."/>
            <person name="Pitluck S."/>
            <person name="Schmutz J."/>
            <person name="Larimer F."/>
            <person name="Land M."/>
            <person name="Hauser L."/>
            <person name="Kyrpides N."/>
            <person name="Ovchinnikova G."/>
            <person name="Li T."/>
            <person name="Liu Z."/>
            <person name="Zhao F."/>
            <person name="Overmann J."/>
            <person name="Bryant D.A."/>
            <person name="Richardson P."/>
        </authorList>
    </citation>
    <scope>NUCLEOTIDE SEQUENCE [LARGE SCALE GENOMIC DNA]</scope>
    <source>
        <strain>BS1</strain>
    </source>
</reference>
<dbReference type="EC" id="2.8.1.13" evidence="1"/>
<dbReference type="EMBL" id="CP001101">
    <property type="protein sequence ID" value="ACE05000.1"/>
    <property type="molecule type" value="Genomic_DNA"/>
</dbReference>
<dbReference type="SMR" id="B3EN11"/>
<dbReference type="STRING" id="331678.Cphamn1_2091"/>
<dbReference type="KEGG" id="cpb:Cphamn1_2091"/>
<dbReference type="eggNOG" id="COG0482">
    <property type="taxonomic scope" value="Bacteria"/>
</dbReference>
<dbReference type="HOGENOM" id="CLU_035188_1_0_10"/>
<dbReference type="OrthoDB" id="9800696at2"/>
<dbReference type="GO" id="GO:0005737">
    <property type="term" value="C:cytoplasm"/>
    <property type="evidence" value="ECO:0007669"/>
    <property type="project" value="UniProtKB-SubCell"/>
</dbReference>
<dbReference type="GO" id="GO:0005524">
    <property type="term" value="F:ATP binding"/>
    <property type="evidence" value="ECO:0007669"/>
    <property type="project" value="UniProtKB-KW"/>
</dbReference>
<dbReference type="GO" id="GO:0000049">
    <property type="term" value="F:tRNA binding"/>
    <property type="evidence" value="ECO:0007669"/>
    <property type="project" value="UniProtKB-KW"/>
</dbReference>
<dbReference type="GO" id="GO:0103016">
    <property type="term" value="F:tRNA-uridine 2-sulfurtransferase activity"/>
    <property type="evidence" value="ECO:0007669"/>
    <property type="project" value="UniProtKB-EC"/>
</dbReference>
<dbReference type="GO" id="GO:0002143">
    <property type="term" value="P:tRNA wobble position uridine thiolation"/>
    <property type="evidence" value="ECO:0007669"/>
    <property type="project" value="TreeGrafter"/>
</dbReference>
<dbReference type="CDD" id="cd01998">
    <property type="entry name" value="MnmA_TRMU-like"/>
    <property type="match status" value="1"/>
</dbReference>
<dbReference type="FunFam" id="2.30.30.280:FF:000001">
    <property type="entry name" value="tRNA-specific 2-thiouridylase MnmA"/>
    <property type="match status" value="1"/>
</dbReference>
<dbReference type="FunFam" id="2.40.30.10:FF:000023">
    <property type="entry name" value="tRNA-specific 2-thiouridylase MnmA"/>
    <property type="match status" value="1"/>
</dbReference>
<dbReference type="Gene3D" id="2.30.30.280">
    <property type="entry name" value="Adenine nucleotide alpha hydrolases-like domains"/>
    <property type="match status" value="1"/>
</dbReference>
<dbReference type="Gene3D" id="3.40.50.620">
    <property type="entry name" value="HUPs"/>
    <property type="match status" value="1"/>
</dbReference>
<dbReference type="Gene3D" id="2.40.30.10">
    <property type="entry name" value="Translation factors"/>
    <property type="match status" value="1"/>
</dbReference>
<dbReference type="HAMAP" id="MF_00144">
    <property type="entry name" value="tRNA_thiouridyl_MnmA"/>
    <property type="match status" value="1"/>
</dbReference>
<dbReference type="InterPro" id="IPR004506">
    <property type="entry name" value="MnmA-like"/>
</dbReference>
<dbReference type="InterPro" id="IPR046885">
    <property type="entry name" value="MnmA-like_C"/>
</dbReference>
<dbReference type="InterPro" id="IPR046884">
    <property type="entry name" value="MnmA-like_central"/>
</dbReference>
<dbReference type="InterPro" id="IPR023382">
    <property type="entry name" value="MnmA-like_central_sf"/>
</dbReference>
<dbReference type="InterPro" id="IPR014729">
    <property type="entry name" value="Rossmann-like_a/b/a_fold"/>
</dbReference>
<dbReference type="NCBIfam" id="NF001138">
    <property type="entry name" value="PRK00143.1"/>
    <property type="match status" value="1"/>
</dbReference>
<dbReference type="NCBIfam" id="TIGR00420">
    <property type="entry name" value="trmU"/>
    <property type="match status" value="1"/>
</dbReference>
<dbReference type="PANTHER" id="PTHR11933:SF5">
    <property type="entry name" value="MITOCHONDRIAL TRNA-SPECIFIC 2-THIOURIDYLASE 1"/>
    <property type="match status" value="1"/>
</dbReference>
<dbReference type="PANTHER" id="PTHR11933">
    <property type="entry name" value="TRNA 5-METHYLAMINOMETHYL-2-THIOURIDYLATE -METHYLTRANSFERASE"/>
    <property type="match status" value="1"/>
</dbReference>
<dbReference type="Pfam" id="PF03054">
    <property type="entry name" value="tRNA_Me_trans"/>
    <property type="match status" value="1"/>
</dbReference>
<dbReference type="Pfam" id="PF20258">
    <property type="entry name" value="tRNA_Me_trans_C"/>
    <property type="match status" value="1"/>
</dbReference>
<dbReference type="Pfam" id="PF20259">
    <property type="entry name" value="tRNA_Me_trans_M"/>
    <property type="match status" value="1"/>
</dbReference>
<dbReference type="SUPFAM" id="SSF52402">
    <property type="entry name" value="Adenine nucleotide alpha hydrolases-like"/>
    <property type="match status" value="1"/>
</dbReference>
<feature type="chain" id="PRO_1000096289" description="tRNA-specific 2-thiouridylase MnmA">
    <location>
        <begin position="1"/>
        <end position="359"/>
    </location>
</feature>
<feature type="region of interest" description="Interaction with tRNA" evidence="1">
    <location>
        <begin position="145"/>
        <end position="147"/>
    </location>
</feature>
<feature type="region of interest" description="Interaction with tRNA" evidence="1">
    <location>
        <begin position="304"/>
        <end position="305"/>
    </location>
</feature>
<feature type="active site" description="Nucleophile" evidence="1">
    <location>
        <position position="99"/>
    </location>
</feature>
<feature type="active site" description="Cysteine persulfide intermediate" evidence="1">
    <location>
        <position position="195"/>
    </location>
</feature>
<feature type="binding site" evidence="1">
    <location>
        <begin position="11"/>
        <end position="18"/>
    </location>
    <ligand>
        <name>ATP</name>
        <dbReference type="ChEBI" id="CHEBI:30616"/>
    </ligand>
</feature>
<feature type="binding site" evidence="1">
    <location>
        <position position="37"/>
    </location>
    <ligand>
        <name>ATP</name>
        <dbReference type="ChEBI" id="CHEBI:30616"/>
    </ligand>
</feature>
<feature type="binding site" evidence="1">
    <location>
        <position position="123"/>
    </location>
    <ligand>
        <name>ATP</name>
        <dbReference type="ChEBI" id="CHEBI:30616"/>
    </ligand>
</feature>
<feature type="site" description="Interaction with tRNA" evidence="1">
    <location>
        <position position="124"/>
    </location>
</feature>
<feature type="site" description="Interaction with tRNA" evidence="1">
    <location>
        <position position="337"/>
    </location>
</feature>
<feature type="disulfide bond" description="Alternate" evidence="1">
    <location>
        <begin position="99"/>
        <end position="195"/>
    </location>
</feature>
<comment type="function">
    <text evidence="1">Catalyzes the 2-thiolation of uridine at the wobble position (U34) of tRNA, leading to the formation of s(2)U34.</text>
</comment>
<comment type="catalytic activity">
    <reaction evidence="1">
        <text>S-sulfanyl-L-cysteinyl-[protein] + uridine(34) in tRNA + AH2 + ATP = 2-thiouridine(34) in tRNA + L-cysteinyl-[protein] + A + AMP + diphosphate + H(+)</text>
        <dbReference type="Rhea" id="RHEA:47032"/>
        <dbReference type="Rhea" id="RHEA-COMP:10131"/>
        <dbReference type="Rhea" id="RHEA-COMP:11726"/>
        <dbReference type="Rhea" id="RHEA-COMP:11727"/>
        <dbReference type="Rhea" id="RHEA-COMP:11728"/>
        <dbReference type="ChEBI" id="CHEBI:13193"/>
        <dbReference type="ChEBI" id="CHEBI:15378"/>
        <dbReference type="ChEBI" id="CHEBI:17499"/>
        <dbReference type="ChEBI" id="CHEBI:29950"/>
        <dbReference type="ChEBI" id="CHEBI:30616"/>
        <dbReference type="ChEBI" id="CHEBI:33019"/>
        <dbReference type="ChEBI" id="CHEBI:61963"/>
        <dbReference type="ChEBI" id="CHEBI:65315"/>
        <dbReference type="ChEBI" id="CHEBI:87170"/>
        <dbReference type="ChEBI" id="CHEBI:456215"/>
        <dbReference type="EC" id="2.8.1.13"/>
    </reaction>
</comment>
<comment type="subcellular location">
    <subcellularLocation>
        <location evidence="1">Cytoplasm</location>
    </subcellularLocation>
</comment>
<comment type="similarity">
    <text evidence="1">Belongs to the MnmA/TRMU family.</text>
</comment>
<evidence type="ECO:0000255" key="1">
    <source>
        <dbReference type="HAMAP-Rule" id="MF_00144"/>
    </source>
</evidence>
<sequence length="359" mass="40062">MMKDKEHVIVGISGGVDSAVAACILIENGYRVTGLHIKVLDHSDDSLHLEKSPLIISDRKEFRFPVFSLNLSGSFRRDVIDYFLQDYLSGRTPNPCMVCNKLIKWKGLLKGADLLQATLVATGHYARIDCGREKCRLLKGTDSQKDQSYFLWMLSSEELSKTLLPVGNLTKQEVRELARRFGVRAAEKKESQEICFVPDNDYREVVKSSRPGLAEKLTGGEIIDTEGKVIGHHAGYPFYTIGQRKGLGISSPEPLYVNRLDPEKNRIRVGGKAMLQCRKLIAGQMNWTGISPPETSTRAAARIRYRDTGEACTIVPVEKERFEVIFDKPKQSVTPGQAVVFYRDDEVIGGGIIVEAISE</sequence>
<name>MNMA_CHLPB</name>
<organism>
    <name type="scientific">Chlorobium phaeobacteroides (strain BS1)</name>
    <dbReference type="NCBI Taxonomy" id="331678"/>
    <lineage>
        <taxon>Bacteria</taxon>
        <taxon>Pseudomonadati</taxon>
        <taxon>Chlorobiota</taxon>
        <taxon>Chlorobiia</taxon>
        <taxon>Chlorobiales</taxon>
        <taxon>Chlorobiaceae</taxon>
        <taxon>Chlorobium/Pelodictyon group</taxon>
        <taxon>Chlorobium</taxon>
    </lineage>
</organism>
<gene>
    <name evidence="1" type="primary">mnmA</name>
    <name type="ordered locus">Cphamn1_2091</name>
</gene>
<protein>
    <recommendedName>
        <fullName evidence="1">tRNA-specific 2-thiouridylase MnmA</fullName>
        <ecNumber evidence="1">2.8.1.13</ecNumber>
    </recommendedName>
</protein>
<accession>B3EN11</accession>